<protein>
    <recommendedName>
        <fullName>Pyrroline-5-carboxylate reductase</fullName>
        <shortName>P5C reductase</shortName>
        <shortName>P5CR</shortName>
        <ecNumber>1.5.1.2</ecNumber>
    </recommendedName>
    <alternativeName>
        <fullName>Protein EMBRYO DEFECTIVE 2772</fullName>
    </alternativeName>
</protein>
<sequence>MEILPIPAESFKVGFIGAGKMAESIARGVVASGVLPPNRICTAVHSNLNRRDVFESFGVNVFSTSEEVVKESDVVIFSVKPQVVKKAVTELKSKLSKNKILVSVAAGIKLNDLQEWSGQDRFIRVMPNTPAAVGEAASVMSLGTGATEEDGAIVAMLFGAVGKILKADEKMFDAVTGLSGSGPAYIFLAIEALADGGVAAGLPRELALSLASQTVLGAATMVSKTGKHPGVLKDDVTSPGGTTIAGVHELEKGSFRATLMNAVVAAAKRSRELSQS</sequence>
<reference key="1">
    <citation type="journal article" date="1993" name="Plant Physiol.">
        <title>Osmoregulation of a pyrroline-5-carboxylate reductase gene in Arabidopsis thaliana.</title>
        <authorList>
            <person name="Verbruggen N."/>
            <person name="Villarroel R."/>
            <person name="van Montagu M."/>
        </authorList>
    </citation>
    <scope>NUCLEOTIDE SEQUENCE [GENOMIC DNA]</scope>
</reference>
<reference key="2">
    <citation type="submission" date="1996-10" db="EMBL/GenBank/DDBJ databases">
        <authorList>
            <person name="Verbruggen N."/>
            <person name="Villarroel R."/>
            <person name="Hua X."/>
            <person name="van Montagu M."/>
        </authorList>
    </citation>
    <scope>NUCLEOTIDE SEQUENCE</scope>
    <source>
        <strain>cv. Landsberg erecta</strain>
    </source>
</reference>
<reference key="3">
    <citation type="journal article" date="2000" name="Nature">
        <title>Sequence and analysis of chromosome 5 of the plant Arabidopsis thaliana.</title>
        <authorList>
            <person name="Tabata S."/>
            <person name="Kaneko T."/>
            <person name="Nakamura Y."/>
            <person name="Kotani H."/>
            <person name="Kato T."/>
            <person name="Asamizu E."/>
            <person name="Miyajima N."/>
            <person name="Sasamoto S."/>
            <person name="Kimura T."/>
            <person name="Hosouchi T."/>
            <person name="Kawashima K."/>
            <person name="Kohara M."/>
            <person name="Matsumoto M."/>
            <person name="Matsuno A."/>
            <person name="Muraki A."/>
            <person name="Nakayama S."/>
            <person name="Nakazaki N."/>
            <person name="Naruo K."/>
            <person name="Okumura S."/>
            <person name="Shinpo S."/>
            <person name="Takeuchi C."/>
            <person name="Wada T."/>
            <person name="Watanabe A."/>
            <person name="Yamada M."/>
            <person name="Yasuda M."/>
            <person name="Sato S."/>
            <person name="de la Bastide M."/>
            <person name="Huang E."/>
            <person name="Spiegel L."/>
            <person name="Gnoj L."/>
            <person name="O'Shaughnessy A."/>
            <person name="Preston R."/>
            <person name="Habermann K."/>
            <person name="Murray J."/>
            <person name="Johnson D."/>
            <person name="Rohlfing T."/>
            <person name="Nelson J."/>
            <person name="Stoneking T."/>
            <person name="Pepin K."/>
            <person name="Spieth J."/>
            <person name="Sekhon M."/>
            <person name="Armstrong J."/>
            <person name="Becker M."/>
            <person name="Belter E."/>
            <person name="Cordum H."/>
            <person name="Cordes M."/>
            <person name="Courtney L."/>
            <person name="Courtney W."/>
            <person name="Dante M."/>
            <person name="Du H."/>
            <person name="Edwards J."/>
            <person name="Fryman J."/>
            <person name="Haakensen B."/>
            <person name="Lamar E."/>
            <person name="Latreille P."/>
            <person name="Leonard S."/>
            <person name="Meyer R."/>
            <person name="Mulvaney E."/>
            <person name="Ozersky P."/>
            <person name="Riley A."/>
            <person name="Strowmatt C."/>
            <person name="Wagner-McPherson C."/>
            <person name="Wollam A."/>
            <person name="Yoakum M."/>
            <person name="Bell M."/>
            <person name="Dedhia N."/>
            <person name="Parnell L."/>
            <person name="Shah R."/>
            <person name="Rodriguez M."/>
            <person name="Hoon See L."/>
            <person name="Vil D."/>
            <person name="Baker J."/>
            <person name="Kirchoff K."/>
            <person name="Toth K."/>
            <person name="King L."/>
            <person name="Bahret A."/>
            <person name="Miller B."/>
            <person name="Marra M.A."/>
            <person name="Martienssen R."/>
            <person name="McCombie W.R."/>
            <person name="Wilson R.K."/>
            <person name="Murphy G."/>
            <person name="Bancroft I."/>
            <person name="Volckaert G."/>
            <person name="Wambutt R."/>
            <person name="Duesterhoeft A."/>
            <person name="Stiekema W."/>
            <person name="Pohl T."/>
            <person name="Entian K.-D."/>
            <person name="Terryn N."/>
            <person name="Hartley N."/>
            <person name="Bent E."/>
            <person name="Johnson S."/>
            <person name="Langham S.-A."/>
            <person name="McCullagh B."/>
            <person name="Robben J."/>
            <person name="Grymonprez B."/>
            <person name="Zimmermann W."/>
            <person name="Ramsperger U."/>
            <person name="Wedler H."/>
            <person name="Balke K."/>
            <person name="Wedler E."/>
            <person name="Peters S."/>
            <person name="van Staveren M."/>
            <person name="Dirkse W."/>
            <person name="Mooijman P."/>
            <person name="Klein Lankhorst R."/>
            <person name="Weitzenegger T."/>
            <person name="Bothe G."/>
            <person name="Rose M."/>
            <person name="Hauf J."/>
            <person name="Berneiser S."/>
            <person name="Hempel S."/>
            <person name="Feldpausch M."/>
            <person name="Lamberth S."/>
            <person name="Villarroel R."/>
            <person name="Gielen J."/>
            <person name="Ardiles W."/>
            <person name="Bents O."/>
            <person name="Lemcke K."/>
            <person name="Kolesov G."/>
            <person name="Mayer K.F.X."/>
            <person name="Rudd S."/>
            <person name="Schoof H."/>
            <person name="Schueller C."/>
            <person name="Zaccaria P."/>
            <person name="Mewes H.-W."/>
            <person name="Bevan M."/>
            <person name="Fransz P.F."/>
        </authorList>
    </citation>
    <scope>NUCLEOTIDE SEQUENCE [LARGE SCALE GENOMIC DNA]</scope>
    <source>
        <strain>cv. Columbia</strain>
    </source>
</reference>
<reference key="4">
    <citation type="journal article" date="2017" name="Plant J.">
        <title>Araport11: a complete reannotation of the Arabidopsis thaliana reference genome.</title>
        <authorList>
            <person name="Cheng C.Y."/>
            <person name="Krishnakumar V."/>
            <person name="Chan A.P."/>
            <person name="Thibaud-Nissen F."/>
            <person name="Schobel S."/>
            <person name="Town C.D."/>
        </authorList>
    </citation>
    <scope>GENOME REANNOTATION</scope>
    <source>
        <strain>cv. Columbia</strain>
    </source>
</reference>
<reference key="5">
    <citation type="journal article" date="2003" name="Science">
        <title>Empirical analysis of transcriptional activity in the Arabidopsis genome.</title>
        <authorList>
            <person name="Yamada K."/>
            <person name="Lim J."/>
            <person name="Dale J.M."/>
            <person name="Chen H."/>
            <person name="Shinn P."/>
            <person name="Palm C.J."/>
            <person name="Southwick A.M."/>
            <person name="Wu H.C."/>
            <person name="Kim C.J."/>
            <person name="Nguyen M."/>
            <person name="Pham P.K."/>
            <person name="Cheuk R.F."/>
            <person name="Karlin-Newmann G."/>
            <person name="Liu S.X."/>
            <person name="Lam B."/>
            <person name="Sakano H."/>
            <person name="Wu T."/>
            <person name="Yu G."/>
            <person name="Miranda M."/>
            <person name="Quach H.L."/>
            <person name="Tripp M."/>
            <person name="Chang C.H."/>
            <person name="Lee J.M."/>
            <person name="Toriumi M.J."/>
            <person name="Chan M.M."/>
            <person name="Tang C.C."/>
            <person name="Onodera C.S."/>
            <person name="Deng J.M."/>
            <person name="Akiyama K."/>
            <person name="Ansari Y."/>
            <person name="Arakawa T."/>
            <person name="Banh J."/>
            <person name="Banno F."/>
            <person name="Bowser L."/>
            <person name="Brooks S.Y."/>
            <person name="Carninci P."/>
            <person name="Chao Q."/>
            <person name="Choy N."/>
            <person name="Enju A."/>
            <person name="Goldsmith A.D."/>
            <person name="Gurjal M."/>
            <person name="Hansen N.F."/>
            <person name="Hayashizaki Y."/>
            <person name="Johnson-Hopson C."/>
            <person name="Hsuan V.W."/>
            <person name="Iida K."/>
            <person name="Karnes M."/>
            <person name="Khan S."/>
            <person name="Koesema E."/>
            <person name="Ishida J."/>
            <person name="Jiang P.X."/>
            <person name="Jones T."/>
            <person name="Kawai J."/>
            <person name="Kamiya A."/>
            <person name="Meyers C."/>
            <person name="Nakajima M."/>
            <person name="Narusaka M."/>
            <person name="Seki M."/>
            <person name="Sakurai T."/>
            <person name="Satou M."/>
            <person name="Tamse R."/>
            <person name="Vaysberg M."/>
            <person name="Wallender E.K."/>
            <person name="Wong C."/>
            <person name="Yamamura Y."/>
            <person name="Yuan S."/>
            <person name="Shinozaki K."/>
            <person name="Davis R.W."/>
            <person name="Theologis A."/>
            <person name="Ecker J.R."/>
        </authorList>
    </citation>
    <scope>NUCLEOTIDE SEQUENCE [LARGE SCALE MRNA]</scope>
    <source>
        <strain>cv. Columbia</strain>
    </source>
</reference>
<reference key="6">
    <citation type="submission" date="2002-03" db="EMBL/GenBank/DDBJ databases">
        <title>Full-length cDNA from Arabidopsis thaliana.</title>
        <authorList>
            <person name="Brover V.V."/>
            <person name="Troukhan M.E."/>
            <person name="Alexandrov N.A."/>
            <person name="Lu Y.-P."/>
            <person name="Flavell R.B."/>
            <person name="Feldmann K.A."/>
        </authorList>
    </citation>
    <scope>NUCLEOTIDE SEQUENCE [LARGE SCALE MRNA]</scope>
</reference>
<keyword id="KW-0025">Alternative splicing</keyword>
<keyword id="KW-0028">Amino-acid biosynthesis</keyword>
<keyword id="KW-0963">Cytoplasm</keyword>
<keyword id="KW-0521">NADP</keyword>
<keyword id="KW-0560">Oxidoreductase</keyword>
<keyword id="KW-0641">Proline biosynthesis</keyword>
<keyword id="KW-1185">Reference proteome</keyword>
<evidence type="ECO:0000305" key="1"/>
<accession>P54904</accession>
<feature type="chain" id="PRO_0000187323" description="Pyrroline-5-carboxylate reductase">
    <location>
        <begin position="1"/>
        <end position="276"/>
    </location>
</feature>
<comment type="catalytic activity">
    <reaction>
        <text>L-proline + NADP(+) = (S)-1-pyrroline-5-carboxylate + NADPH + 2 H(+)</text>
        <dbReference type="Rhea" id="RHEA:14109"/>
        <dbReference type="ChEBI" id="CHEBI:15378"/>
        <dbReference type="ChEBI" id="CHEBI:17388"/>
        <dbReference type="ChEBI" id="CHEBI:57783"/>
        <dbReference type="ChEBI" id="CHEBI:58349"/>
        <dbReference type="ChEBI" id="CHEBI:60039"/>
        <dbReference type="EC" id="1.5.1.2"/>
    </reaction>
</comment>
<comment type="catalytic activity">
    <reaction>
        <text>L-proline + NAD(+) = (S)-1-pyrroline-5-carboxylate + NADH + 2 H(+)</text>
        <dbReference type="Rhea" id="RHEA:14105"/>
        <dbReference type="ChEBI" id="CHEBI:15378"/>
        <dbReference type="ChEBI" id="CHEBI:17388"/>
        <dbReference type="ChEBI" id="CHEBI:57540"/>
        <dbReference type="ChEBI" id="CHEBI:57945"/>
        <dbReference type="ChEBI" id="CHEBI:60039"/>
        <dbReference type="EC" id="1.5.1.2"/>
    </reaction>
</comment>
<comment type="pathway">
    <text>Amino-acid biosynthesis; L-proline biosynthesis; L-proline from L-glutamate 5-semialdehyde: step 1/1.</text>
</comment>
<comment type="subcellular location">
    <subcellularLocation>
        <location>Cytoplasm</location>
    </subcellularLocation>
</comment>
<comment type="alternative products">
    <event type="alternative splicing"/>
    <isoform>
        <id>P54904-1</id>
        <name>1</name>
        <sequence type="displayed"/>
    </isoform>
    <text>A number of isoforms are produced. According to EST sequences.</text>
</comment>
<comment type="similarity">
    <text evidence="1">Belongs to the pyrroline-5-carboxylate reductase family.</text>
</comment>
<dbReference type="EC" id="1.5.1.2"/>
<dbReference type="EMBL" id="M76538">
    <property type="protein sequence ID" value="AAA61346.1"/>
    <property type="molecule type" value="Genomic_DNA"/>
</dbReference>
<dbReference type="EMBL" id="Y08951">
    <property type="protein sequence ID" value="CAA70148.1"/>
    <property type="molecule type" value="Genomic_DNA"/>
</dbReference>
<dbReference type="EMBL" id="AL391149">
    <property type="protein sequence ID" value="CAC01879.1"/>
    <property type="molecule type" value="Genomic_DNA"/>
</dbReference>
<dbReference type="EMBL" id="CP002688">
    <property type="protein sequence ID" value="AED92078.1"/>
    <property type="molecule type" value="Genomic_DNA"/>
</dbReference>
<dbReference type="EMBL" id="AF410303">
    <property type="protein sequence ID" value="AAK95289.1"/>
    <property type="molecule type" value="mRNA"/>
</dbReference>
<dbReference type="EMBL" id="AY097368">
    <property type="protein sequence ID" value="AAM19884.1"/>
    <property type="molecule type" value="mRNA"/>
</dbReference>
<dbReference type="EMBL" id="AY087530">
    <property type="protein sequence ID" value="AAM65072.1"/>
    <property type="molecule type" value="mRNA"/>
</dbReference>
<dbReference type="PIR" id="JQ2334">
    <property type="entry name" value="JQ2334"/>
</dbReference>
<dbReference type="RefSeq" id="NP_196984.1">
    <molecule id="P54904-1"/>
    <property type="nucleotide sequence ID" value="NM_121484.5"/>
</dbReference>
<dbReference type="SMR" id="P54904"/>
<dbReference type="BioGRID" id="16609">
    <property type="interactions" value="2"/>
</dbReference>
<dbReference type="FunCoup" id="P54904">
    <property type="interactions" value="2188"/>
</dbReference>
<dbReference type="STRING" id="3702.P54904"/>
<dbReference type="BindingDB" id="P54904"/>
<dbReference type="ChEMBL" id="CHEMBL2242730"/>
<dbReference type="iPTMnet" id="P54904"/>
<dbReference type="PaxDb" id="3702-AT5G14800.1"/>
<dbReference type="ProteomicsDB" id="248739">
    <molecule id="P54904-1"/>
</dbReference>
<dbReference type="EnsemblPlants" id="AT5G14800.1">
    <molecule id="P54904-1"/>
    <property type="protein sequence ID" value="AT5G14800.1"/>
    <property type="gene ID" value="AT5G14800"/>
</dbReference>
<dbReference type="GeneID" id="831332"/>
<dbReference type="Gramene" id="AT5G14800.1">
    <molecule id="P54904-1"/>
    <property type="protein sequence ID" value="AT5G14800.1"/>
    <property type="gene ID" value="AT5G14800"/>
</dbReference>
<dbReference type="KEGG" id="ath:AT5G14800"/>
<dbReference type="Araport" id="AT5G14800"/>
<dbReference type="TAIR" id="AT5G14800">
    <property type="gene designation" value="P5CR"/>
</dbReference>
<dbReference type="eggNOG" id="KOG3124">
    <property type="taxonomic scope" value="Eukaryota"/>
</dbReference>
<dbReference type="HOGENOM" id="CLU_042344_3_1_1"/>
<dbReference type="InParanoid" id="P54904"/>
<dbReference type="OMA" id="VWAVKPQ"/>
<dbReference type="PhylomeDB" id="P54904"/>
<dbReference type="SABIO-RK" id="P54904"/>
<dbReference type="UniPathway" id="UPA00098">
    <property type="reaction ID" value="UER00361"/>
</dbReference>
<dbReference type="PRO" id="PR:P54904"/>
<dbReference type="Proteomes" id="UP000006548">
    <property type="component" value="Chromosome 5"/>
</dbReference>
<dbReference type="ExpressionAtlas" id="P54904">
    <property type="expression patterns" value="baseline and differential"/>
</dbReference>
<dbReference type="GO" id="GO:0005829">
    <property type="term" value="C:cytosol"/>
    <property type="evidence" value="ECO:0007005"/>
    <property type="project" value="TAIR"/>
</dbReference>
<dbReference type="GO" id="GO:0009505">
    <property type="term" value="C:plant-type cell wall"/>
    <property type="evidence" value="ECO:0007005"/>
    <property type="project" value="TAIR"/>
</dbReference>
<dbReference type="GO" id="GO:0004735">
    <property type="term" value="F:pyrroline-5-carboxylate reductase activity"/>
    <property type="evidence" value="ECO:0000250"/>
    <property type="project" value="TAIR"/>
</dbReference>
<dbReference type="GO" id="GO:0055129">
    <property type="term" value="P:L-proline biosynthetic process"/>
    <property type="evidence" value="ECO:0007669"/>
    <property type="project" value="UniProtKB-UniPathway"/>
</dbReference>
<dbReference type="GO" id="GO:0009408">
    <property type="term" value="P:response to heat"/>
    <property type="evidence" value="ECO:0000270"/>
    <property type="project" value="TAIR"/>
</dbReference>
<dbReference type="GO" id="GO:0009651">
    <property type="term" value="P:response to salt stress"/>
    <property type="evidence" value="ECO:0000270"/>
    <property type="project" value="TAIR"/>
</dbReference>
<dbReference type="FunFam" id="1.10.3730.10:FF:000001">
    <property type="entry name" value="Pyrroline-5-carboxylate reductase"/>
    <property type="match status" value="1"/>
</dbReference>
<dbReference type="FunFam" id="3.40.50.720:FF:000190">
    <property type="entry name" value="Pyrroline-5-carboxylate reductase"/>
    <property type="match status" value="1"/>
</dbReference>
<dbReference type="Gene3D" id="3.40.50.720">
    <property type="entry name" value="NAD(P)-binding Rossmann-like Domain"/>
    <property type="match status" value="1"/>
</dbReference>
<dbReference type="Gene3D" id="1.10.3730.10">
    <property type="entry name" value="ProC C-terminal domain-like"/>
    <property type="match status" value="1"/>
</dbReference>
<dbReference type="HAMAP" id="MF_01925">
    <property type="entry name" value="P5C_reductase"/>
    <property type="match status" value="1"/>
</dbReference>
<dbReference type="InterPro" id="IPR008927">
    <property type="entry name" value="6-PGluconate_DH-like_C_sf"/>
</dbReference>
<dbReference type="InterPro" id="IPR036291">
    <property type="entry name" value="NAD(P)-bd_dom_sf"/>
</dbReference>
<dbReference type="InterPro" id="IPR028939">
    <property type="entry name" value="P5C_Rdtase_cat_N"/>
</dbReference>
<dbReference type="InterPro" id="IPR053790">
    <property type="entry name" value="P5CR-like_CS"/>
</dbReference>
<dbReference type="InterPro" id="IPR029036">
    <property type="entry name" value="P5CR_dimer"/>
</dbReference>
<dbReference type="InterPro" id="IPR000304">
    <property type="entry name" value="Pyrroline-COOH_reductase"/>
</dbReference>
<dbReference type="NCBIfam" id="TIGR00112">
    <property type="entry name" value="proC"/>
    <property type="match status" value="1"/>
</dbReference>
<dbReference type="PANTHER" id="PTHR11645">
    <property type="entry name" value="PYRROLINE-5-CARBOXYLATE REDUCTASE"/>
    <property type="match status" value="1"/>
</dbReference>
<dbReference type="PANTHER" id="PTHR11645:SF0">
    <property type="entry name" value="PYRROLINE-5-CARBOXYLATE REDUCTASE 3"/>
    <property type="match status" value="1"/>
</dbReference>
<dbReference type="Pfam" id="PF03807">
    <property type="entry name" value="F420_oxidored"/>
    <property type="match status" value="1"/>
</dbReference>
<dbReference type="Pfam" id="PF14748">
    <property type="entry name" value="P5CR_dimer"/>
    <property type="match status" value="1"/>
</dbReference>
<dbReference type="PIRSF" id="PIRSF000193">
    <property type="entry name" value="Pyrrol-5-carb_rd"/>
    <property type="match status" value="1"/>
</dbReference>
<dbReference type="SUPFAM" id="SSF48179">
    <property type="entry name" value="6-phosphogluconate dehydrogenase C-terminal domain-like"/>
    <property type="match status" value="1"/>
</dbReference>
<dbReference type="SUPFAM" id="SSF51735">
    <property type="entry name" value="NAD(P)-binding Rossmann-fold domains"/>
    <property type="match status" value="1"/>
</dbReference>
<dbReference type="PROSITE" id="PS00521">
    <property type="entry name" value="P5CR"/>
    <property type="match status" value="1"/>
</dbReference>
<name>P5CR1_ARATH</name>
<proteinExistence type="evidence at transcript level"/>
<organism>
    <name type="scientific">Arabidopsis thaliana</name>
    <name type="common">Mouse-ear cress</name>
    <dbReference type="NCBI Taxonomy" id="3702"/>
    <lineage>
        <taxon>Eukaryota</taxon>
        <taxon>Viridiplantae</taxon>
        <taxon>Streptophyta</taxon>
        <taxon>Embryophyta</taxon>
        <taxon>Tracheophyta</taxon>
        <taxon>Spermatophyta</taxon>
        <taxon>Magnoliopsida</taxon>
        <taxon>eudicotyledons</taxon>
        <taxon>Gunneridae</taxon>
        <taxon>Pentapetalae</taxon>
        <taxon>rosids</taxon>
        <taxon>malvids</taxon>
        <taxon>Brassicales</taxon>
        <taxon>Brassicaceae</taxon>
        <taxon>Camelineae</taxon>
        <taxon>Arabidopsis</taxon>
    </lineage>
</organism>
<gene>
    <name type="primary">PROC1</name>
    <name type="synonym">EMB2772</name>
    <name type="ordered locus">At5g14800</name>
    <name type="ORF">T9L3_100</name>
</gene>